<dbReference type="EC" id="2.4.1.227" evidence="1"/>
<dbReference type="EMBL" id="CP000611">
    <property type="protein sequence ID" value="ABQ73930.1"/>
    <property type="molecule type" value="Genomic_DNA"/>
</dbReference>
<dbReference type="RefSeq" id="WP_003899190.1">
    <property type="nucleotide sequence ID" value="NZ_CP016972.1"/>
</dbReference>
<dbReference type="SMR" id="A5U4I0"/>
<dbReference type="CAZy" id="GT28">
    <property type="family name" value="Glycosyltransferase Family 28"/>
</dbReference>
<dbReference type="KEGG" id="mra:MRA_2168"/>
<dbReference type="eggNOG" id="COG0707">
    <property type="taxonomic scope" value="Bacteria"/>
</dbReference>
<dbReference type="HOGENOM" id="CLU_037404_1_0_11"/>
<dbReference type="UniPathway" id="UPA00219"/>
<dbReference type="Proteomes" id="UP000001988">
    <property type="component" value="Chromosome"/>
</dbReference>
<dbReference type="GO" id="GO:0005886">
    <property type="term" value="C:plasma membrane"/>
    <property type="evidence" value="ECO:0007669"/>
    <property type="project" value="UniProtKB-SubCell"/>
</dbReference>
<dbReference type="GO" id="GO:0051991">
    <property type="term" value="F:UDP-N-acetyl-D-glucosamine:N-acetylmuramoyl-L-alanyl-D-glutamyl-meso-2,6-diaminopimelyl-D-alanyl-D-alanine-diphosphoundecaprenol 4-beta-N-acetylglucosaminlytransferase activity"/>
    <property type="evidence" value="ECO:0007669"/>
    <property type="project" value="RHEA"/>
</dbReference>
<dbReference type="GO" id="GO:0050511">
    <property type="term" value="F:undecaprenyldiphospho-muramoylpentapeptide beta-N-acetylglucosaminyltransferase activity"/>
    <property type="evidence" value="ECO:0007669"/>
    <property type="project" value="UniProtKB-UniRule"/>
</dbReference>
<dbReference type="GO" id="GO:0005975">
    <property type="term" value="P:carbohydrate metabolic process"/>
    <property type="evidence" value="ECO:0007669"/>
    <property type="project" value="InterPro"/>
</dbReference>
<dbReference type="GO" id="GO:0051301">
    <property type="term" value="P:cell division"/>
    <property type="evidence" value="ECO:0007669"/>
    <property type="project" value="UniProtKB-KW"/>
</dbReference>
<dbReference type="GO" id="GO:0071555">
    <property type="term" value="P:cell wall organization"/>
    <property type="evidence" value="ECO:0007669"/>
    <property type="project" value="UniProtKB-KW"/>
</dbReference>
<dbReference type="GO" id="GO:0030259">
    <property type="term" value="P:lipid glycosylation"/>
    <property type="evidence" value="ECO:0007669"/>
    <property type="project" value="UniProtKB-UniRule"/>
</dbReference>
<dbReference type="GO" id="GO:0009252">
    <property type="term" value="P:peptidoglycan biosynthetic process"/>
    <property type="evidence" value="ECO:0007669"/>
    <property type="project" value="UniProtKB-UniRule"/>
</dbReference>
<dbReference type="GO" id="GO:0008360">
    <property type="term" value="P:regulation of cell shape"/>
    <property type="evidence" value="ECO:0007669"/>
    <property type="project" value="UniProtKB-KW"/>
</dbReference>
<dbReference type="CDD" id="cd03785">
    <property type="entry name" value="GT28_MurG"/>
    <property type="match status" value="1"/>
</dbReference>
<dbReference type="Gene3D" id="3.40.50.2000">
    <property type="entry name" value="Glycogen Phosphorylase B"/>
    <property type="match status" value="2"/>
</dbReference>
<dbReference type="HAMAP" id="MF_00033">
    <property type="entry name" value="MurG"/>
    <property type="match status" value="1"/>
</dbReference>
<dbReference type="InterPro" id="IPR006009">
    <property type="entry name" value="GlcNAc_MurG"/>
</dbReference>
<dbReference type="InterPro" id="IPR007235">
    <property type="entry name" value="Glyco_trans_28_C"/>
</dbReference>
<dbReference type="InterPro" id="IPR004276">
    <property type="entry name" value="GlycoTrans_28_N"/>
</dbReference>
<dbReference type="NCBIfam" id="TIGR01133">
    <property type="entry name" value="murG"/>
    <property type="match status" value="1"/>
</dbReference>
<dbReference type="PANTHER" id="PTHR21015:SF22">
    <property type="entry name" value="GLYCOSYLTRANSFERASE"/>
    <property type="match status" value="1"/>
</dbReference>
<dbReference type="PANTHER" id="PTHR21015">
    <property type="entry name" value="UDP-N-ACETYLGLUCOSAMINE--N-ACETYLMURAMYL-(PENTAPEPTIDE) PYROPHOSPHORYL-UNDECAPRENOL N-ACETYLGLUCOSAMINE TRANSFERASE 1"/>
    <property type="match status" value="1"/>
</dbReference>
<dbReference type="Pfam" id="PF04101">
    <property type="entry name" value="Glyco_tran_28_C"/>
    <property type="match status" value="1"/>
</dbReference>
<dbReference type="Pfam" id="PF03033">
    <property type="entry name" value="Glyco_transf_28"/>
    <property type="match status" value="1"/>
</dbReference>
<dbReference type="SUPFAM" id="SSF53756">
    <property type="entry name" value="UDP-Glycosyltransferase/glycogen phosphorylase"/>
    <property type="match status" value="1"/>
</dbReference>
<evidence type="ECO:0000255" key="1">
    <source>
        <dbReference type="HAMAP-Rule" id="MF_00033"/>
    </source>
</evidence>
<evidence type="ECO:0000256" key="2">
    <source>
        <dbReference type="SAM" id="MobiDB-lite"/>
    </source>
</evidence>
<gene>
    <name evidence="1" type="primary">murG</name>
    <name type="ordered locus">MRA_2168</name>
</gene>
<protein>
    <recommendedName>
        <fullName evidence="1">UDP-N-acetylglucosamine--N-acetylmuramyl-(pentapeptide) pyrophosphoryl-undecaprenol N-acetylglucosamine transferase</fullName>
        <ecNumber evidence="1">2.4.1.227</ecNumber>
    </recommendedName>
    <alternativeName>
        <fullName evidence="1">Undecaprenyl-PP-MurNAc-pentapeptide-UDPGlcNAc GlcNAc transferase</fullName>
    </alternativeName>
</protein>
<keyword id="KW-0131">Cell cycle</keyword>
<keyword id="KW-0132">Cell division</keyword>
<keyword id="KW-1003">Cell membrane</keyword>
<keyword id="KW-0133">Cell shape</keyword>
<keyword id="KW-0961">Cell wall biogenesis/degradation</keyword>
<keyword id="KW-0328">Glycosyltransferase</keyword>
<keyword id="KW-0472">Membrane</keyword>
<keyword id="KW-0573">Peptidoglycan synthesis</keyword>
<keyword id="KW-1185">Reference proteome</keyword>
<keyword id="KW-0808">Transferase</keyword>
<proteinExistence type="inferred from homology"/>
<reference key="1">
    <citation type="journal article" date="2008" name="PLoS ONE">
        <title>Genetic basis of virulence attenuation revealed by comparative genomic analysis of Mycobacterium tuberculosis strain H37Ra versus H37Rv.</title>
        <authorList>
            <person name="Zheng H."/>
            <person name="Lu L."/>
            <person name="Wang B."/>
            <person name="Pu S."/>
            <person name="Zhang X."/>
            <person name="Zhu G."/>
            <person name="Shi W."/>
            <person name="Zhang L."/>
            <person name="Wang H."/>
            <person name="Wang S."/>
            <person name="Zhao G."/>
            <person name="Zhang Y."/>
        </authorList>
    </citation>
    <scope>NUCLEOTIDE SEQUENCE [LARGE SCALE GENOMIC DNA]</scope>
    <source>
        <strain>ATCC 25177 / H37Ra</strain>
    </source>
</reference>
<sequence>MKDTVSQPAGGRGATAPRPADAASPSCGSSPSADSVSVVLAGGGTAGHVEPAMAVADALVALDPRVRITALGTLRGLETRLVPQRGYHLELITAVPMPRKPGGDLARLPSRVWRAVREARDVLDDVDADVVVGFGGYVALPAYLAARGLPLPPRRRRRIPVVIHEANARAGLANRVGAHTADRVLSAVPDSGLRRAEVVGVPVRASIAALDRAVLRAEARAHFGFPDDARVLLVFGGSQGAVSLNRAVSGAAADLAAAGVCVLHAHGPQNVLELRRRAQGDPPYVAVPYLDRMELAYAAADLVICRAGAMTVAEVSAVGLPAIYVPLPIGNGEQRLNALPVVNAGGGMVVADAALTPELVARQVAGLLTDPARLAAMTAAAARVGHRDAAGQVARAALAVATGAGARTTT</sequence>
<comment type="function">
    <text evidence="1">Cell wall formation. Catalyzes the transfer of a GlcNAc subunit on undecaprenyl-pyrophosphoryl-MurNAc-pentapeptide (lipid intermediate I) to form undecaprenyl-pyrophosphoryl-MurNAc-(pentapeptide)GlcNAc (lipid intermediate II).</text>
</comment>
<comment type="catalytic activity">
    <reaction evidence="1">
        <text>di-trans,octa-cis-undecaprenyl diphospho-N-acetyl-alpha-D-muramoyl-L-alanyl-D-glutamyl-meso-2,6-diaminopimeloyl-D-alanyl-D-alanine + UDP-N-acetyl-alpha-D-glucosamine = di-trans,octa-cis-undecaprenyl diphospho-[N-acetyl-alpha-D-glucosaminyl-(1-&gt;4)]-N-acetyl-alpha-D-muramoyl-L-alanyl-D-glutamyl-meso-2,6-diaminopimeloyl-D-alanyl-D-alanine + UDP + H(+)</text>
        <dbReference type="Rhea" id="RHEA:31227"/>
        <dbReference type="ChEBI" id="CHEBI:15378"/>
        <dbReference type="ChEBI" id="CHEBI:57705"/>
        <dbReference type="ChEBI" id="CHEBI:58223"/>
        <dbReference type="ChEBI" id="CHEBI:61387"/>
        <dbReference type="ChEBI" id="CHEBI:61388"/>
        <dbReference type="EC" id="2.4.1.227"/>
    </reaction>
</comment>
<comment type="pathway">
    <text evidence="1">Cell wall biogenesis; peptidoglycan biosynthesis.</text>
</comment>
<comment type="subcellular location">
    <subcellularLocation>
        <location evidence="1">Cell membrane</location>
        <topology evidence="1">Peripheral membrane protein</topology>
        <orientation evidence="1">Cytoplasmic side</orientation>
    </subcellularLocation>
</comment>
<comment type="similarity">
    <text evidence="1">Belongs to the glycosyltransferase 28 family. MurG subfamily.</text>
</comment>
<organism>
    <name type="scientific">Mycobacterium tuberculosis (strain ATCC 25177 / H37Ra)</name>
    <dbReference type="NCBI Taxonomy" id="419947"/>
    <lineage>
        <taxon>Bacteria</taxon>
        <taxon>Bacillati</taxon>
        <taxon>Actinomycetota</taxon>
        <taxon>Actinomycetes</taxon>
        <taxon>Mycobacteriales</taxon>
        <taxon>Mycobacteriaceae</taxon>
        <taxon>Mycobacterium</taxon>
        <taxon>Mycobacterium tuberculosis complex</taxon>
    </lineage>
</organism>
<accession>A5U4I0</accession>
<name>MURG_MYCTA</name>
<feature type="chain" id="PRO_1000002671" description="UDP-N-acetylglucosamine--N-acetylmuramyl-(pentapeptide) pyrophosphoryl-undecaprenol N-acetylglucosamine transferase">
    <location>
        <begin position="1"/>
        <end position="410"/>
    </location>
</feature>
<feature type="region of interest" description="Disordered" evidence="2">
    <location>
        <begin position="1"/>
        <end position="35"/>
    </location>
</feature>
<feature type="compositionally biased region" description="Low complexity" evidence="2">
    <location>
        <begin position="14"/>
        <end position="35"/>
    </location>
</feature>
<feature type="binding site" evidence="1">
    <location>
        <begin position="45"/>
        <end position="47"/>
    </location>
    <ligand>
        <name>UDP-N-acetyl-alpha-D-glucosamine</name>
        <dbReference type="ChEBI" id="CHEBI:57705"/>
    </ligand>
</feature>
<feature type="binding site" evidence="1">
    <location>
        <position position="167"/>
    </location>
    <ligand>
        <name>UDP-N-acetyl-alpha-D-glucosamine</name>
        <dbReference type="ChEBI" id="CHEBI:57705"/>
    </ligand>
</feature>
<feature type="binding site" evidence="1">
    <location>
        <position position="204"/>
    </location>
    <ligand>
        <name>UDP-N-acetyl-alpha-D-glucosamine</name>
        <dbReference type="ChEBI" id="CHEBI:57705"/>
    </ligand>
</feature>
<feature type="binding site" evidence="1">
    <location>
        <position position="238"/>
    </location>
    <ligand>
        <name>UDP-N-acetyl-alpha-D-glucosamine</name>
        <dbReference type="ChEBI" id="CHEBI:57705"/>
    </ligand>
</feature>
<feature type="binding site" evidence="1">
    <location>
        <position position="334"/>
    </location>
    <ligand>
        <name>UDP-N-acetyl-alpha-D-glucosamine</name>
        <dbReference type="ChEBI" id="CHEBI:57705"/>
    </ligand>
</feature>